<keyword id="KW-0067">ATP-binding</keyword>
<keyword id="KW-0418">Kinase</keyword>
<keyword id="KW-0545">Nucleotide biosynthesis</keyword>
<keyword id="KW-0547">Nucleotide-binding</keyword>
<keyword id="KW-0808">Transferase</keyword>
<feature type="chain" id="PRO_1000023220" description="Probable thymidylate kinase">
    <location>
        <begin position="1"/>
        <end position="196"/>
    </location>
</feature>
<feature type="binding site" evidence="1">
    <location>
        <begin position="9"/>
        <end position="16"/>
    </location>
    <ligand>
        <name>ATP</name>
        <dbReference type="ChEBI" id="CHEBI:30616"/>
    </ligand>
</feature>
<dbReference type="EC" id="2.7.4.9" evidence="1"/>
<dbReference type="EMBL" id="CP000743">
    <property type="protein sequence ID" value="ABR55931.1"/>
    <property type="molecule type" value="Genomic_DNA"/>
</dbReference>
<dbReference type="RefSeq" id="WP_011973063.1">
    <property type="nucleotide sequence ID" value="NC_009635.1"/>
</dbReference>
<dbReference type="SMR" id="A6UTV9"/>
<dbReference type="STRING" id="419665.Maeo_0344"/>
<dbReference type="GeneID" id="5327176"/>
<dbReference type="KEGG" id="mae:Maeo_0344"/>
<dbReference type="eggNOG" id="arCOG01891">
    <property type="taxonomic scope" value="Archaea"/>
</dbReference>
<dbReference type="HOGENOM" id="CLU_049131_1_3_2"/>
<dbReference type="OrthoDB" id="43083at2157"/>
<dbReference type="Proteomes" id="UP000001106">
    <property type="component" value="Chromosome"/>
</dbReference>
<dbReference type="GO" id="GO:0005737">
    <property type="term" value="C:cytoplasm"/>
    <property type="evidence" value="ECO:0007669"/>
    <property type="project" value="TreeGrafter"/>
</dbReference>
<dbReference type="GO" id="GO:0005524">
    <property type="term" value="F:ATP binding"/>
    <property type="evidence" value="ECO:0007669"/>
    <property type="project" value="UniProtKB-UniRule"/>
</dbReference>
<dbReference type="GO" id="GO:0004798">
    <property type="term" value="F:dTMP kinase activity"/>
    <property type="evidence" value="ECO:0007669"/>
    <property type="project" value="UniProtKB-UniRule"/>
</dbReference>
<dbReference type="GO" id="GO:0006233">
    <property type="term" value="P:dTDP biosynthetic process"/>
    <property type="evidence" value="ECO:0007669"/>
    <property type="project" value="InterPro"/>
</dbReference>
<dbReference type="GO" id="GO:0006235">
    <property type="term" value="P:dTTP biosynthetic process"/>
    <property type="evidence" value="ECO:0007669"/>
    <property type="project" value="UniProtKB-UniRule"/>
</dbReference>
<dbReference type="GO" id="GO:0006227">
    <property type="term" value="P:dUDP biosynthetic process"/>
    <property type="evidence" value="ECO:0007669"/>
    <property type="project" value="TreeGrafter"/>
</dbReference>
<dbReference type="CDD" id="cd01672">
    <property type="entry name" value="TMPK"/>
    <property type="match status" value="1"/>
</dbReference>
<dbReference type="Gene3D" id="3.40.50.300">
    <property type="entry name" value="P-loop containing nucleotide triphosphate hydrolases"/>
    <property type="match status" value="1"/>
</dbReference>
<dbReference type="HAMAP" id="MF_00165">
    <property type="entry name" value="Thymidylate_kinase"/>
    <property type="match status" value="1"/>
</dbReference>
<dbReference type="InterPro" id="IPR027417">
    <property type="entry name" value="P-loop_NTPase"/>
</dbReference>
<dbReference type="InterPro" id="IPR039430">
    <property type="entry name" value="Thymidylate_kin-like_dom"/>
</dbReference>
<dbReference type="InterPro" id="IPR018095">
    <property type="entry name" value="Thymidylate_kin_CS"/>
</dbReference>
<dbReference type="InterPro" id="IPR018094">
    <property type="entry name" value="Thymidylate_kinase"/>
</dbReference>
<dbReference type="NCBIfam" id="TIGR00041">
    <property type="entry name" value="DTMP_kinase"/>
    <property type="match status" value="1"/>
</dbReference>
<dbReference type="PANTHER" id="PTHR10344">
    <property type="entry name" value="THYMIDYLATE KINASE"/>
    <property type="match status" value="1"/>
</dbReference>
<dbReference type="PANTHER" id="PTHR10344:SF4">
    <property type="entry name" value="UMP-CMP KINASE 2, MITOCHONDRIAL"/>
    <property type="match status" value="1"/>
</dbReference>
<dbReference type="Pfam" id="PF02223">
    <property type="entry name" value="Thymidylate_kin"/>
    <property type="match status" value="1"/>
</dbReference>
<dbReference type="SUPFAM" id="SSF52540">
    <property type="entry name" value="P-loop containing nucleoside triphosphate hydrolases"/>
    <property type="match status" value="1"/>
</dbReference>
<dbReference type="PROSITE" id="PS01331">
    <property type="entry name" value="THYMIDYLATE_KINASE"/>
    <property type="match status" value="1"/>
</dbReference>
<organism>
    <name type="scientific">Methanococcus aeolicus (strain ATCC BAA-1280 / DSM 17508 / OCM 812 / Nankai-3)</name>
    <dbReference type="NCBI Taxonomy" id="419665"/>
    <lineage>
        <taxon>Archaea</taxon>
        <taxon>Methanobacteriati</taxon>
        <taxon>Methanobacteriota</taxon>
        <taxon>Methanomada group</taxon>
        <taxon>Methanococci</taxon>
        <taxon>Methanococcales</taxon>
        <taxon>Methanococcaceae</taxon>
        <taxon>Methanococcus</taxon>
    </lineage>
</organism>
<protein>
    <recommendedName>
        <fullName evidence="1">Probable thymidylate kinase</fullName>
        <ecNumber evidence="1">2.7.4.9</ecNumber>
    </recommendedName>
    <alternativeName>
        <fullName evidence="1">dTMP kinase</fullName>
    </alternativeName>
</protein>
<proteinExistence type="inferred from homology"/>
<evidence type="ECO:0000255" key="1">
    <source>
        <dbReference type="HAMAP-Rule" id="MF_00165"/>
    </source>
</evidence>
<gene>
    <name evidence="1" type="primary">tmk</name>
    <name type="ordered locus">Maeo_0344</name>
</gene>
<reference key="1">
    <citation type="submission" date="2007-06" db="EMBL/GenBank/DDBJ databases">
        <title>Complete sequence of Methanococcus aeolicus Nankai-3.</title>
        <authorList>
            <consortium name="US DOE Joint Genome Institute"/>
            <person name="Copeland A."/>
            <person name="Lucas S."/>
            <person name="Lapidus A."/>
            <person name="Barry K."/>
            <person name="Glavina del Rio T."/>
            <person name="Dalin E."/>
            <person name="Tice H."/>
            <person name="Pitluck S."/>
            <person name="Chain P."/>
            <person name="Malfatti S."/>
            <person name="Shin M."/>
            <person name="Vergez L."/>
            <person name="Schmutz J."/>
            <person name="Larimer F."/>
            <person name="Land M."/>
            <person name="Hauser L."/>
            <person name="Kyrpides N."/>
            <person name="Lykidis A."/>
            <person name="Sieprawska-Lupa M."/>
            <person name="Whitman W.B."/>
            <person name="Richardson P."/>
        </authorList>
    </citation>
    <scope>NUCLEOTIDE SEQUENCE [LARGE SCALE GENOMIC DNA]</scope>
    <source>
        <strain>ATCC BAA-1280 / DSM 17508 / OCM 812 / Nankai-3</strain>
    </source>
</reference>
<name>KTHY_META3</name>
<comment type="catalytic activity">
    <reaction evidence="1">
        <text>dTMP + ATP = dTDP + ADP</text>
        <dbReference type="Rhea" id="RHEA:13517"/>
        <dbReference type="ChEBI" id="CHEBI:30616"/>
        <dbReference type="ChEBI" id="CHEBI:58369"/>
        <dbReference type="ChEBI" id="CHEBI:63528"/>
        <dbReference type="ChEBI" id="CHEBI:456216"/>
        <dbReference type="EC" id="2.7.4.9"/>
    </reaction>
</comment>
<comment type="similarity">
    <text evidence="1">Belongs to the thymidylate kinase family.</text>
</comment>
<sequence length="196" mass="22595">MNKFIVFEGIDGSGKTTQAKLLADYLNGIYTCEPTNGEIGQLIRKVLGGKNCEKESLALLFAGDRVEHIKEIEHKLIENMVICDRYVYSSMVYQSIQGIDIDFIASINRFAKIPDVLIYLDVSIEESLKRMGDRDSKEIFENKEILQKVNKKYMNIINERLFEPKNGYILINTDNKTVEEVHKEIIKKLMDKKIIL</sequence>
<accession>A6UTV9</accession>